<organism>
    <name type="scientific">Mus musculus</name>
    <name type="common">Mouse</name>
    <dbReference type="NCBI Taxonomy" id="10090"/>
    <lineage>
        <taxon>Eukaryota</taxon>
        <taxon>Metazoa</taxon>
        <taxon>Chordata</taxon>
        <taxon>Craniata</taxon>
        <taxon>Vertebrata</taxon>
        <taxon>Euteleostomi</taxon>
        <taxon>Mammalia</taxon>
        <taxon>Eutheria</taxon>
        <taxon>Euarchontoglires</taxon>
        <taxon>Glires</taxon>
        <taxon>Rodentia</taxon>
        <taxon>Myomorpha</taxon>
        <taxon>Muroidea</taxon>
        <taxon>Muridae</taxon>
        <taxon>Murinae</taxon>
        <taxon>Mus</taxon>
        <taxon>Mus</taxon>
    </lineage>
</organism>
<reference key="1">
    <citation type="journal article" date="1990" name="Nucleic Acids Res.">
        <title>Nucleotide sequence of a cDNA for mouse cytochrome c oxidase subunit VIIc.</title>
        <authorList>
            <person name="Akamatsu M."/>
            <person name="Grossman L.I."/>
        </authorList>
    </citation>
    <scope>NUCLEOTIDE SEQUENCE [MRNA]</scope>
    <source>
        <strain>BALB/cJ</strain>
        <tissue>Heart</tissue>
    </source>
</reference>
<reference key="2">
    <citation type="journal article" date="2005" name="Science">
        <title>The transcriptional landscape of the mammalian genome.</title>
        <authorList>
            <person name="Carninci P."/>
            <person name="Kasukawa T."/>
            <person name="Katayama S."/>
            <person name="Gough J."/>
            <person name="Frith M.C."/>
            <person name="Maeda N."/>
            <person name="Oyama R."/>
            <person name="Ravasi T."/>
            <person name="Lenhard B."/>
            <person name="Wells C."/>
            <person name="Kodzius R."/>
            <person name="Shimokawa K."/>
            <person name="Bajic V.B."/>
            <person name="Brenner S.E."/>
            <person name="Batalov S."/>
            <person name="Forrest A.R."/>
            <person name="Zavolan M."/>
            <person name="Davis M.J."/>
            <person name="Wilming L.G."/>
            <person name="Aidinis V."/>
            <person name="Allen J.E."/>
            <person name="Ambesi-Impiombato A."/>
            <person name="Apweiler R."/>
            <person name="Aturaliya R.N."/>
            <person name="Bailey T.L."/>
            <person name="Bansal M."/>
            <person name="Baxter L."/>
            <person name="Beisel K.W."/>
            <person name="Bersano T."/>
            <person name="Bono H."/>
            <person name="Chalk A.M."/>
            <person name="Chiu K.P."/>
            <person name="Choudhary V."/>
            <person name="Christoffels A."/>
            <person name="Clutterbuck D.R."/>
            <person name="Crowe M.L."/>
            <person name="Dalla E."/>
            <person name="Dalrymple B.P."/>
            <person name="de Bono B."/>
            <person name="Della Gatta G."/>
            <person name="di Bernardo D."/>
            <person name="Down T."/>
            <person name="Engstrom P."/>
            <person name="Fagiolini M."/>
            <person name="Faulkner G."/>
            <person name="Fletcher C.F."/>
            <person name="Fukushima T."/>
            <person name="Furuno M."/>
            <person name="Futaki S."/>
            <person name="Gariboldi M."/>
            <person name="Georgii-Hemming P."/>
            <person name="Gingeras T.R."/>
            <person name="Gojobori T."/>
            <person name="Green R.E."/>
            <person name="Gustincich S."/>
            <person name="Harbers M."/>
            <person name="Hayashi Y."/>
            <person name="Hensch T.K."/>
            <person name="Hirokawa N."/>
            <person name="Hill D."/>
            <person name="Huminiecki L."/>
            <person name="Iacono M."/>
            <person name="Ikeo K."/>
            <person name="Iwama A."/>
            <person name="Ishikawa T."/>
            <person name="Jakt M."/>
            <person name="Kanapin A."/>
            <person name="Katoh M."/>
            <person name="Kawasawa Y."/>
            <person name="Kelso J."/>
            <person name="Kitamura H."/>
            <person name="Kitano H."/>
            <person name="Kollias G."/>
            <person name="Krishnan S.P."/>
            <person name="Kruger A."/>
            <person name="Kummerfeld S.K."/>
            <person name="Kurochkin I.V."/>
            <person name="Lareau L.F."/>
            <person name="Lazarevic D."/>
            <person name="Lipovich L."/>
            <person name="Liu J."/>
            <person name="Liuni S."/>
            <person name="McWilliam S."/>
            <person name="Madan Babu M."/>
            <person name="Madera M."/>
            <person name="Marchionni L."/>
            <person name="Matsuda H."/>
            <person name="Matsuzawa S."/>
            <person name="Miki H."/>
            <person name="Mignone F."/>
            <person name="Miyake S."/>
            <person name="Morris K."/>
            <person name="Mottagui-Tabar S."/>
            <person name="Mulder N."/>
            <person name="Nakano N."/>
            <person name="Nakauchi H."/>
            <person name="Ng P."/>
            <person name="Nilsson R."/>
            <person name="Nishiguchi S."/>
            <person name="Nishikawa S."/>
            <person name="Nori F."/>
            <person name="Ohara O."/>
            <person name="Okazaki Y."/>
            <person name="Orlando V."/>
            <person name="Pang K.C."/>
            <person name="Pavan W.J."/>
            <person name="Pavesi G."/>
            <person name="Pesole G."/>
            <person name="Petrovsky N."/>
            <person name="Piazza S."/>
            <person name="Reed J."/>
            <person name="Reid J.F."/>
            <person name="Ring B.Z."/>
            <person name="Ringwald M."/>
            <person name="Rost B."/>
            <person name="Ruan Y."/>
            <person name="Salzberg S.L."/>
            <person name="Sandelin A."/>
            <person name="Schneider C."/>
            <person name="Schoenbach C."/>
            <person name="Sekiguchi K."/>
            <person name="Semple C.A."/>
            <person name="Seno S."/>
            <person name="Sessa L."/>
            <person name="Sheng Y."/>
            <person name="Shibata Y."/>
            <person name="Shimada H."/>
            <person name="Shimada K."/>
            <person name="Silva D."/>
            <person name="Sinclair B."/>
            <person name="Sperling S."/>
            <person name="Stupka E."/>
            <person name="Sugiura K."/>
            <person name="Sultana R."/>
            <person name="Takenaka Y."/>
            <person name="Taki K."/>
            <person name="Tammoja K."/>
            <person name="Tan S.L."/>
            <person name="Tang S."/>
            <person name="Taylor M.S."/>
            <person name="Tegner J."/>
            <person name="Teichmann S.A."/>
            <person name="Ueda H.R."/>
            <person name="van Nimwegen E."/>
            <person name="Verardo R."/>
            <person name="Wei C.L."/>
            <person name="Yagi K."/>
            <person name="Yamanishi H."/>
            <person name="Zabarovsky E."/>
            <person name="Zhu S."/>
            <person name="Zimmer A."/>
            <person name="Hide W."/>
            <person name="Bult C."/>
            <person name="Grimmond S.M."/>
            <person name="Teasdale R.D."/>
            <person name="Liu E.T."/>
            <person name="Brusic V."/>
            <person name="Quackenbush J."/>
            <person name="Wahlestedt C."/>
            <person name="Mattick J.S."/>
            <person name="Hume D.A."/>
            <person name="Kai C."/>
            <person name="Sasaki D."/>
            <person name="Tomaru Y."/>
            <person name="Fukuda S."/>
            <person name="Kanamori-Katayama M."/>
            <person name="Suzuki M."/>
            <person name="Aoki J."/>
            <person name="Arakawa T."/>
            <person name="Iida J."/>
            <person name="Imamura K."/>
            <person name="Itoh M."/>
            <person name="Kato T."/>
            <person name="Kawaji H."/>
            <person name="Kawagashira N."/>
            <person name="Kawashima T."/>
            <person name="Kojima M."/>
            <person name="Kondo S."/>
            <person name="Konno H."/>
            <person name="Nakano K."/>
            <person name="Ninomiya N."/>
            <person name="Nishio T."/>
            <person name="Okada M."/>
            <person name="Plessy C."/>
            <person name="Shibata K."/>
            <person name="Shiraki T."/>
            <person name="Suzuki S."/>
            <person name="Tagami M."/>
            <person name="Waki K."/>
            <person name="Watahiki A."/>
            <person name="Okamura-Oho Y."/>
            <person name="Suzuki H."/>
            <person name="Kawai J."/>
            <person name="Hayashizaki Y."/>
        </authorList>
    </citation>
    <scope>NUCLEOTIDE SEQUENCE [LARGE SCALE MRNA]</scope>
    <source>
        <strain>C57BL/6J</strain>
        <tissue>Bone marrow</tissue>
        <tissue>Kidney</tissue>
        <tissue>Small intestine</tissue>
    </source>
</reference>
<reference key="3">
    <citation type="journal article" date="2004" name="Genome Res.">
        <title>The status, quality, and expansion of the NIH full-length cDNA project: the Mammalian Gene Collection (MGC).</title>
        <authorList>
            <consortium name="The MGC Project Team"/>
        </authorList>
    </citation>
    <scope>NUCLEOTIDE SEQUENCE [LARGE SCALE MRNA]</scope>
    <source>
        <strain>C57BL/6J</strain>
        <strain>FVB/N</strain>
        <tissue>Brain</tissue>
        <tissue>Colon</tissue>
    </source>
</reference>
<reference key="4">
    <citation type="submission" date="2007-04" db="UniProtKB">
        <authorList>
            <person name="Lubec G."/>
            <person name="Kang S.U."/>
        </authorList>
    </citation>
    <scope>PROTEIN SEQUENCE OF 37-57</scope>
    <scope>IDENTIFICATION BY MASS SPECTROMETRY</scope>
    <source>
        <strain>C57BL/6J</strain>
        <tissue>Brain</tissue>
    </source>
</reference>
<reference key="5">
    <citation type="journal article" date="2010" name="Cell">
        <title>A tissue-specific atlas of mouse protein phosphorylation and expression.</title>
        <authorList>
            <person name="Huttlin E.L."/>
            <person name="Jedrychowski M.P."/>
            <person name="Elias J.E."/>
            <person name="Goswami T."/>
            <person name="Rad R."/>
            <person name="Beausoleil S.A."/>
            <person name="Villen J."/>
            <person name="Haas W."/>
            <person name="Sowa M.E."/>
            <person name="Gygi S.P."/>
        </authorList>
    </citation>
    <scope>IDENTIFICATION BY MASS SPECTROMETRY [LARGE SCALE ANALYSIS]</scope>
    <source>
        <tissue>Brown adipose tissue</tissue>
        <tissue>Kidney</tissue>
    </source>
</reference>
<reference key="6">
    <citation type="journal article" date="2013" name="Mol. Cell">
        <title>SIRT5-mediated lysine desuccinylation impacts diverse metabolic pathways.</title>
        <authorList>
            <person name="Park J."/>
            <person name="Chen Y."/>
            <person name="Tishkoff D.X."/>
            <person name="Peng C."/>
            <person name="Tan M."/>
            <person name="Dai L."/>
            <person name="Xie Z."/>
            <person name="Zhang Y."/>
            <person name="Zwaans B.M."/>
            <person name="Skinner M.E."/>
            <person name="Lombard D.B."/>
            <person name="Zhao Y."/>
        </authorList>
    </citation>
    <scope>SUCCINYLATION [LARGE SCALE ANALYSIS] AT LYS-25</scope>
    <scope>IDENTIFICATION BY MASS SPECTROMETRY [LARGE SCALE ANALYSIS]</scope>
    <source>
        <tissue>Liver</tissue>
    </source>
</reference>
<reference key="7">
    <citation type="journal article" date="2013" name="Proc. Natl. Acad. Sci. U.S.A.">
        <title>Label-free quantitative proteomics of the lysine acetylome in mitochondria identifies substrates of SIRT3 in metabolic pathways.</title>
        <authorList>
            <person name="Rardin M.J."/>
            <person name="Newman J.C."/>
            <person name="Held J.M."/>
            <person name="Cusack M.P."/>
            <person name="Sorensen D.J."/>
            <person name="Li B."/>
            <person name="Schilling B."/>
            <person name="Mooney S.D."/>
            <person name="Kahn C.R."/>
            <person name="Verdin E."/>
            <person name="Gibson B.W."/>
        </authorList>
    </citation>
    <scope>ACETYLATION [LARGE SCALE ANALYSIS] AT LYS-25</scope>
    <scope>IDENTIFICATION BY MASS SPECTROMETRY [LARGE SCALE ANALYSIS]</scope>
    <source>
        <tissue>Liver</tissue>
    </source>
</reference>
<reference evidence="6 7 8" key="8">
    <citation type="journal article" date="2021" name="Nature">
        <title>Structure and assembly of the mammalian mitochondrial supercomplex CIII2CIV.</title>
        <authorList>
            <person name="Vercellino I."/>
            <person name="Sazanov L.A."/>
        </authorList>
    </citation>
    <scope>STRUCTURE BY ELECTRON MICROSCOPY (3.20 ANGSTROMS) IN COMPLEX WITH MITOCHONDRIAL RESPIRATORY SUPERCOMPLEX</scope>
    <scope>SUBUNIT</scope>
</reference>
<reference evidence="9" key="9">
    <citation type="journal article" date="2024" name="Nat. Struct. Mol. Biol.">
        <title>SCAF1 drives the compositional diversity of mammalian respirasomes.</title>
        <authorList>
            <person name="Vercellino I."/>
            <person name="Sazanov L.A."/>
        </authorList>
    </citation>
    <scope>STRUCTURE BY ELECTRON MICROSCOPY (3.60 ANGSTROMS) IN COMPLEX WITH MITOCHONDRIAL RESPIRATORY SUPERCOMPLEX</scope>
    <scope>FUNCTION</scope>
    <scope>SUBCELLULAR LOCATION</scope>
    <scope>SUBUNIT</scope>
</reference>
<sequence length="63" mass="7333">MLGQSIRRFTTSVVRRSHYEEGPGKNLPFSVENKWRLLAMMTVYFGSGFAAPFFIVRHQLLKK</sequence>
<gene>
    <name type="primary">Cox7c</name>
    <name type="synonym">Cox7c1</name>
</gene>
<keyword id="KW-0002">3D-structure</keyword>
<keyword id="KW-0007">Acetylation</keyword>
<keyword id="KW-0903">Direct protein sequencing</keyword>
<keyword id="KW-0472">Membrane</keyword>
<keyword id="KW-0496">Mitochondrion</keyword>
<keyword id="KW-0999">Mitochondrion inner membrane</keyword>
<keyword id="KW-1185">Reference proteome</keyword>
<keyword id="KW-0809">Transit peptide</keyword>
<keyword id="KW-0812">Transmembrane</keyword>
<keyword id="KW-1133">Transmembrane helix</keyword>
<accession>P17665</accession>
<accession>Q3U5S7</accession>
<dbReference type="EMBL" id="X52940">
    <property type="protein sequence ID" value="CAA37115.1"/>
    <property type="molecule type" value="mRNA"/>
</dbReference>
<dbReference type="EMBL" id="AK002494">
    <property type="protein sequence ID" value="BAB22142.1"/>
    <property type="molecule type" value="mRNA"/>
</dbReference>
<dbReference type="EMBL" id="AK027989">
    <property type="protein sequence ID" value="BAC25693.1"/>
    <property type="molecule type" value="mRNA"/>
</dbReference>
<dbReference type="EMBL" id="AK131871">
    <property type="protein sequence ID" value="BAE20843.1"/>
    <property type="molecule type" value="mRNA"/>
</dbReference>
<dbReference type="EMBL" id="AK153444">
    <property type="protein sequence ID" value="BAE31999.1"/>
    <property type="molecule type" value="mRNA"/>
</dbReference>
<dbReference type="EMBL" id="AK168077">
    <property type="protein sequence ID" value="BAE40050.1"/>
    <property type="molecule type" value="mRNA"/>
</dbReference>
<dbReference type="EMBL" id="BC010772">
    <property type="protein sequence ID" value="AAH10772.1"/>
    <property type="molecule type" value="mRNA"/>
</dbReference>
<dbReference type="EMBL" id="BC086792">
    <property type="protein sequence ID" value="AAH86792.1"/>
    <property type="molecule type" value="mRNA"/>
</dbReference>
<dbReference type="CCDS" id="CCDS26668.1"/>
<dbReference type="PIR" id="S10303">
    <property type="entry name" value="S10303"/>
</dbReference>
<dbReference type="RefSeq" id="NP_031775.1">
    <property type="nucleotide sequence ID" value="NM_007749.3"/>
</dbReference>
<dbReference type="PDB" id="7O37">
    <property type="method" value="EM"/>
    <property type="resolution" value="3.20 A"/>
    <property type="chains" value="l=17-63"/>
</dbReference>
<dbReference type="PDB" id="7O3C">
    <property type="method" value="EM"/>
    <property type="resolution" value="3.30 A"/>
    <property type="chains" value="l=17-63"/>
</dbReference>
<dbReference type="PDB" id="7O3E">
    <property type="method" value="EM"/>
    <property type="resolution" value="3.60 A"/>
    <property type="chains" value="l=17-63"/>
</dbReference>
<dbReference type="PDB" id="8PW5">
    <property type="method" value="EM"/>
    <property type="resolution" value="3.60 A"/>
    <property type="chains" value="l/y=1-63"/>
</dbReference>
<dbReference type="PDB" id="8PW6">
    <property type="method" value="EM"/>
    <property type="resolution" value="3.30 A"/>
    <property type="chains" value="y=1-63"/>
</dbReference>
<dbReference type="PDB" id="8PW7">
    <property type="method" value="EM"/>
    <property type="resolution" value="3.50 A"/>
    <property type="chains" value="y=1-63"/>
</dbReference>
<dbReference type="PDBsum" id="7O37"/>
<dbReference type="PDBsum" id="7O3C"/>
<dbReference type="PDBsum" id="7O3E"/>
<dbReference type="PDBsum" id="8PW5"/>
<dbReference type="PDBsum" id="8PW6"/>
<dbReference type="PDBsum" id="8PW7"/>
<dbReference type="EMDB" id="EMD-12702"/>
<dbReference type="EMDB" id="EMD-12703"/>
<dbReference type="EMDB" id="EMD-12705"/>
<dbReference type="EMDB" id="EMD-17989"/>
<dbReference type="EMDB" id="EMD-17990"/>
<dbReference type="EMDB" id="EMD-17991"/>
<dbReference type="SMR" id="P17665"/>
<dbReference type="BioGRID" id="198848">
    <property type="interactions" value="10"/>
</dbReference>
<dbReference type="CORUM" id="P17665"/>
<dbReference type="FunCoup" id="P17665">
    <property type="interactions" value="1523"/>
</dbReference>
<dbReference type="STRING" id="10090.ENSMUSP00000115419"/>
<dbReference type="GlyGen" id="P17665">
    <property type="glycosylation" value="1 site, 1 O-linked glycan (1 site)"/>
</dbReference>
<dbReference type="iPTMnet" id="P17665"/>
<dbReference type="PhosphoSitePlus" id="P17665"/>
<dbReference type="jPOST" id="P17665"/>
<dbReference type="PaxDb" id="10090-ENSMUSP00000115419"/>
<dbReference type="PeptideAtlas" id="P17665"/>
<dbReference type="ProteomicsDB" id="283609"/>
<dbReference type="Pumba" id="P17665"/>
<dbReference type="TopDownProteomics" id="P17665"/>
<dbReference type="Antibodypedia" id="44491">
    <property type="antibodies" value="54 antibodies from 17 providers"/>
</dbReference>
<dbReference type="DNASU" id="12867"/>
<dbReference type="Ensembl" id="ENSMUST00000131011.2">
    <property type="protein sequence ID" value="ENSMUSP00000115419.2"/>
    <property type="gene ID" value="ENSMUSG00000017778.15"/>
</dbReference>
<dbReference type="GeneID" id="12867"/>
<dbReference type="KEGG" id="mmu:12867"/>
<dbReference type="UCSC" id="uc007riy.1">
    <property type="organism name" value="mouse"/>
</dbReference>
<dbReference type="AGR" id="MGI:103226"/>
<dbReference type="CTD" id="1350"/>
<dbReference type="MGI" id="MGI:103226">
    <property type="gene designation" value="Cox7c"/>
</dbReference>
<dbReference type="VEuPathDB" id="HostDB:ENSMUSG00000017778"/>
<dbReference type="eggNOG" id="KOG4527">
    <property type="taxonomic scope" value="Eukaryota"/>
</dbReference>
<dbReference type="GeneTree" id="ENSGT00390000018086"/>
<dbReference type="HOGENOM" id="CLU_194769_0_0_1"/>
<dbReference type="InParanoid" id="P17665"/>
<dbReference type="OMA" id="SIENKWR"/>
<dbReference type="OrthoDB" id="9974841at2759"/>
<dbReference type="PhylomeDB" id="P17665"/>
<dbReference type="TreeFam" id="TF105069"/>
<dbReference type="BRENDA" id="7.1.1.9">
    <property type="organism ID" value="3474"/>
</dbReference>
<dbReference type="Reactome" id="R-MMU-5628897">
    <property type="pathway name" value="TP53 Regulates Metabolic Genes"/>
</dbReference>
<dbReference type="Reactome" id="R-MMU-611105">
    <property type="pathway name" value="Respiratory electron transport"/>
</dbReference>
<dbReference type="Reactome" id="R-MMU-9707564">
    <property type="pathway name" value="Cytoprotection by HMOX1"/>
</dbReference>
<dbReference type="Reactome" id="R-MMU-9864848">
    <property type="pathway name" value="Complex IV assembly"/>
</dbReference>
<dbReference type="UniPathway" id="UPA00705"/>
<dbReference type="BioGRID-ORCS" id="12867">
    <property type="hits" value="11 hits in 45 CRISPR screens"/>
</dbReference>
<dbReference type="ChiTaRS" id="Cox7c">
    <property type="organism name" value="mouse"/>
</dbReference>
<dbReference type="PRO" id="PR:P17665"/>
<dbReference type="Proteomes" id="UP000000589">
    <property type="component" value="Chromosome 13"/>
</dbReference>
<dbReference type="RNAct" id="P17665">
    <property type="molecule type" value="protein"/>
</dbReference>
<dbReference type="Bgee" id="ENSMUSG00000017778">
    <property type="expression patterns" value="Expressed in quadriceps femoris and 96 other cell types or tissues"/>
</dbReference>
<dbReference type="ExpressionAtlas" id="P17665">
    <property type="expression patterns" value="baseline and differential"/>
</dbReference>
<dbReference type="GO" id="GO:0005743">
    <property type="term" value="C:mitochondrial inner membrane"/>
    <property type="evidence" value="ECO:0000314"/>
    <property type="project" value="UniProtKB"/>
</dbReference>
<dbReference type="GO" id="GO:0005739">
    <property type="term" value="C:mitochondrion"/>
    <property type="evidence" value="ECO:0007005"/>
    <property type="project" value="MGI"/>
</dbReference>
<dbReference type="GO" id="GO:0045277">
    <property type="term" value="C:respiratory chain complex IV"/>
    <property type="evidence" value="ECO:0000314"/>
    <property type="project" value="UniProtKB"/>
</dbReference>
<dbReference type="GO" id="GO:0006123">
    <property type="term" value="P:mitochondrial electron transport, cytochrome c to oxygen"/>
    <property type="evidence" value="ECO:0007669"/>
    <property type="project" value="InterPro"/>
</dbReference>
<dbReference type="CDD" id="cd00929">
    <property type="entry name" value="Cyt_c_Oxidase_VIIc"/>
    <property type="match status" value="1"/>
</dbReference>
<dbReference type="FunFam" id="4.10.49.10:FF:000001">
    <property type="entry name" value="Cytochrome c oxidase subunit 7C"/>
    <property type="match status" value="1"/>
</dbReference>
<dbReference type="Gene3D" id="4.10.49.10">
    <property type="entry name" value="Cytochrome c oxidase subunit VIIc"/>
    <property type="match status" value="1"/>
</dbReference>
<dbReference type="InterPro" id="IPR004202">
    <property type="entry name" value="COX7C/Cox8"/>
</dbReference>
<dbReference type="InterPro" id="IPR036636">
    <property type="entry name" value="COX7C/Cox8_sf"/>
</dbReference>
<dbReference type="PANTHER" id="PTHR13313:SF0">
    <property type="entry name" value="CYTOCHROME C OXIDASE SUBUNIT 7C, MITOCHONDRIAL"/>
    <property type="match status" value="1"/>
</dbReference>
<dbReference type="PANTHER" id="PTHR13313">
    <property type="entry name" value="CYTOCHROME C OXIDASE SUBUNIT VIIC"/>
    <property type="match status" value="1"/>
</dbReference>
<dbReference type="Pfam" id="PF02935">
    <property type="entry name" value="COX7C"/>
    <property type="match status" value="1"/>
</dbReference>
<dbReference type="SUPFAM" id="SSF81427">
    <property type="entry name" value="Mitochondrial cytochrome c oxidase subunit VIIc (aka VIIIa)"/>
    <property type="match status" value="1"/>
</dbReference>
<protein>
    <recommendedName>
        <fullName>Cytochrome c oxidase subunit 7C, mitochondrial</fullName>
    </recommendedName>
    <alternativeName>
        <fullName>Cytochrome c oxidase polypeptide VIIc</fullName>
    </alternativeName>
</protein>
<comment type="function">
    <text evidence="3 4">Component of the cytochrome c oxidase, the last enzyme in the mitochondrial electron transport chain which drives oxidative phosphorylation. The respiratory chain contains 3 multisubunit complexes succinate dehydrogenase (complex II, CII), ubiquinol-cytochrome c oxidoreductase (cytochrome b-c1 complex, complex III, CIII) and cytochrome c oxidase (complex IV, CIV), that cooperate to transfer electrons derived from NADH and succinate to molecular oxygen, creating an electrochemical gradient over the inner membrane that drives transmembrane transport and the ATP synthase. Cytochrome c oxidase is the component of the respiratory chain that catalyzes the reduction of oxygen to water. Electrons originating from reduced cytochrome c in the intermembrane space (IMS) are transferred via the dinuclear copper A center (CU(A)) of subunit 2 and heme A of subunit 1 to the active site in subunit 1, a binuclear center (BNC) formed by heme A3 and copper B (CU(B)). The BNC reduces molecular oxygen to 2 water molecules using 4 electrons from cytochrome c in the IMS and 4 protons from the mitochondrial matrix.</text>
</comment>
<comment type="pathway">
    <text evidence="3 4">Energy metabolism; oxidative phosphorylation.</text>
</comment>
<comment type="subunit">
    <text evidence="2 3 4">Component of the cytochrome c oxidase (complex IV, CIV), a multisubunit enzyme composed of 14 subunits (PubMed:34616041, PubMed:38575788). The complex is composed of a catalytic core of 3 subunits MT-CO1, MT-CO2 and MT-CO3, encoded in the mitochondrial DNA, and 11 supernumerary subunits COX4I, COX5A, COX5B, COX6A, COX6B, COX6C, COX7A, COX7B, COX7C, COX8 and NDUFA4, which are encoded in the nuclear genome (PubMed:34616041, PubMed:38575788). The complex exists as a monomer or a dimer and forms supercomplexes (SCs) in the inner mitochondrial membrane with NADH-ubiquinone oxidoreductase (complex I, CI) and ubiquinol-cytochrome c oxidoreductase (cytochrome b-c1 complex, complex III, CIII), resulting in different assemblies (supercomplex SCI(1)III(2)IV(1) and megacomplex MCI(2)III(2)IV(2)) (PubMed:34616041, PubMed:38575788). Interacts with RAB5IF (By similarity).</text>
</comment>
<comment type="subcellular location">
    <subcellularLocation>
        <location evidence="3 4">Mitochondrion inner membrane</location>
        <topology evidence="3 4">Single-pass membrane protein</topology>
    </subcellularLocation>
</comment>
<comment type="similarity">
    <text evidence="5">Belongs to the cytochrome c oxidase VIIc family.</text>
</comment>
<feature type="transit peptide" description="Mitochondrion" evidence="1">
    <location>
        <begin position="1"/>
        <end position="16"/>
    </location>
</feature>
<feature type="chain" id="PRO_0000006166" description="Cytochrome c oxidase subunit 7C, mitochondrial">
    <location>
        <begin position="17"/>
        <end position="63"/>
    </location>
</feature>
<feature type="topological domain" description="Mitochondrial matrix" evidence="3 7 8">
    <location>
        <begin position="17"/>
        <end position="34"/>
    </location>
</feature>
<feature type="transmembrane region" description="Helical" evidence="3 7 8">
    <location>
        <begin position="35"/>
        <end position="57"/>
    </location>
</feature>
<feature type="topological domain" description="Mitochondrial intermembrane" evidence="3 7 8">
    <location>
        <begin position="58"/>
        <end position="63"/>
    </location>
</feature>
<feature type="modified residue" description="N6-acetyllysine; alternate" evidence="10">
    <location>
        <position position="25"/>
    </location>
</feature>
<feature type="modified residue" description="N6-succinyllysine; alternate" evidence="11">
    <location>
        <position position="25"/>
    </location>
</feature>
<feature type="turn" evidence="12">
    <location>
        <begin position="23"/>
        <end position="25"/>
    </location>
</feature>
<feature type="strand" evidence="12">
    <location>
        <begin position="26"/>
        <end position="29"/>
    </location>
</feature>
<feature type="helix" evidence="12">
    <location>
        <begin position="34"/>
        <end position="62"/>
    </location>
</feature>
<name>COX7C_MOUSE</name>
<proteinExistence type="evidence at protein level"/>
<evidence type="ECO:0000250" key="1">
    <source>
        <dbReference type="UniProtKB" id="P00430"/>
    </source>
</evidence>
<evidence type="ECO:0000250" key="2">
    <source>
        <dbReference type="UniProtKB" id="P15954"/>
    </source>
</evidence>
<evidence type="ECO:0000269" key="3">
    <source>
    </source>
</evidence>
<evidence type="ECO:0000269" key="4">
    <source>
    </source>
</evidence>
<evidence type="ECO:0000305" key="5"/>
<evidence type="ECO:0000312" key="6">
    <source>
        <dbReference type="PDB" id="7O3E"/>
    </source>
</evidence>
<evidence type="ECO:0007744" key="7">
    <source>
        <dbReference type="PDB" id="7O37"/>
    </source>
</evidence>
<evidence type="ECO:0007744" key="8">
    <source>
        <dbReference type="PDB" id="7O3C"/>
    </source>
</evidence>
<evidence type="ECO:0007744" key="9">
    <source>
        <dbReference type="PDB" id="8PW5"/>
    </source>
</evidence>
<evidence type="ECO:0007744" key="10">
    <source>
    </source>
</evidence>
<evidence type="ECO:0007744" key="11">
    <source>
    </source>
</evidence>
<evidence type="ECO:0007829" key="12">
    <source>
        <dbReference type="PDB" id="7O37"/>
    </source>
</evidence>